<feature type="chain" id="PRO_0000314493" description="Guanosine-5'-triphosphate,3'-diphosphate pyrophosphatase">
    <location>
        <begin position="1"/>
        <end position="494"/>
    </location>
</feature>
<reference key="1">
    <citation type="journal article" date="2010" name="PLoS ONE">
        <title>Genome sequence of Cronobacter sakazakii BAA-894 and comparative genomic hybridization analysis with other Cronobacter species.</title>
        <authorList>
            <person name="Kucerova E."/>
            <person name="Clifton S.W."/>
            <person name="Xia X.Q."/>
            <person name="Long F."/>
            <person name="Porwollik S."/>
            <person name="Fulton L."/>
            <person name="Fronick C."/>
            <person name="Minx P."/>
            <person name="Kyung K."/>
            <person name="Warren W."/>
            <person name="Fulton R."/>
            <person name="Feng D."/>
            <person name="Wollam A."/>
            <person name="Shah N."/>
            <person name="Bhonagiri V."/>
            <person name="Nash W.E."/>
            <person name="Hallsworth-Pepin K."/>
            <person name="Wilson R.K."/>
            <person name="McClelland M."/>
            <person name="Forsythe S.J."/>
        </authorList>
    </citation>
    <scope>NUCLEOTIDE SEQUENCE [LARGE SCALE GENOMIC DNA]</scope>
    <source>
        <strain>ATCC BAA-894</strain>
    </source>
</reference>
<sequence>MPGTPSLYAAIDLGSNSFHMLVVREVAGSIQTLTRVKRKVRLAAGLGADNALSADAMERGWQCLRLFAERLQDIPPSQIRVVATATLRLATNADVFVARAQEILGCPVQVIAGEEEARLIYQGVAHTTGGADRRLVVDIGGASTELVTGTGARATSLFSLPMGCVTFLERFFTDRSLTQEHFASAEQAARDILQPVIAQLRGQGWKICVGASGTVQALQEIMMAQGMDERITLAKLQQLKARAIHCGRLEELEIEGLTLERALVFPSGLAILIAIFSELEIECMTLAGGALREGLVYGMLHLAVDQDIRNRTLKNIQRRFMVDIAQAGRVAQLAERFAVSVEREWALDDLSRALLHSASLLHEVGLAVDFKRAPQHAAYLVNNLDLPGFTPAQKKLLATLLLNQTGTVDLPALQQQNAVPLRVAERLCRLLRLAIIFASRRRDDMLPDVTLTAHDDTLTASLPQDWLSVHPLGAEMLEQEQLWQSYVHWQLDVK</sequence>
<accession>A7MQI3</accession>
<protein>
    <recommendedName>
        <fullName evidence="1">Guanosine-5'-triphosphate,3'-diphosphate pyrophosphatase</fullName>
        <ecNumber evidence="1">3.6.1.40</ecNumber>
    </recommendedName>
    <alternativeName>
        <fullName evidence="1">Guanosine pentaphosphate phosphohydrolase</fullName>
    </alternativeName>
    <alternativeName>
        <fullName evidence="1">pppGpp-5'-phosphohydrolase</fullName>
    </alternativeName>
</protein>
<organism>
    <name type="scientific">Cronobacter sakazakii (strain ATCC BAA-894)</name>
    <name type="common">Enterobacter sakazakii</name>
    <dbReference type="NCBI Taxonomy" id="290339"/>
    <lineage>
        <taxon>Bacteria</taxon>
        <taxon>Pseudomonadati</taxon>
        <taxon>Pseudomonadota</taxon>
        <taxon>Gammaproteobacteria</taxon>
        <taxon>Enterobacterales</taxon>
        <taxon>Enterobacteriaceae</taxon>
        <taxon>Cronobacter</taxon>
    </lineage>
</organism>
<comment type="function">
    <text evidence="1">Catalyzes the conversion of pppGpp to ppGpp. Guanosine pentaphosphate (pppGpp) is a cytoplasmic signaling molecule which together with ppGpp controls the 'stringent response', an adaptive process that allows bacteria to respond to amino acid starvation, resulting in the coordinated regulation of numerous cellular activities.</text>
</comment>
<comment type="catalytic activity">
    <reaction evidence="1">
        <text>guanosine 3'-diphosphate 5'-triphosphate + H2O = guanosine 3',5'-bis(diphosphate) + phosphate + H(+)</text>
        <dbReference type="Rhea" id="RHEA:13073"/>
        <dbReference type="ChEBI" id="CHEBI:15377"/>
        <dbReference type="ChEBI" id="CHEBI:15378"/>
        <dbReference type="ChEBI" id="CHEBI:43474"/>
        <dbReference type="ChEBI" id="CHEBI:77828"/>
        <dbReference type="ChEBI" id="CHEBI:142410"/>
        <dbReference type="EC" id="3.6.1.40"/>
    </reaction>
</comment>
<comment type="pathway">
    <text evidence="1">Purine metabolism; ppGpp biosynthesis; ppGpp from GTP: step 2/2.</text>
</comment>
<comment type="similarity">
    <text evidence="1">Belongs to the GppA/Ppx family. GppA subfamily.</text>
</comment>
<name>GPPA_CROS8</name>
<proteinExistence type="inferred from homology"/>
<evidence type="ECO:0000255" key="1">
    <source>
        <dbReference type="HAMAP-Rule" id="MF_01550"/>
    </source>
</evidence>
<dbReference type="EC" id="3.6.1.40" evidence="1"/>
<dbReference type="EMBL" id="CP000783">
    <property type="protein sequence ID" value="ABU78970.1"/>
    <property type="molecule type" value="Genomic_DNA"/>
</dbReference>
<dbReference type="RefSeq" id="WP_012126057.1">
    <property type="nucleotide sequence ID" value="NC_009778.1"/>
</dbReference>
<dbReference type="SMR" id="A7MQI3"/>
<dbReference type="KEGG" id="esa:ESA_03778"/>
<dbReference type="PATRIC" id="fig|290339.8.peg.3359"/>
<dbReference type="HOGENOM" id="CLU_025908_4_0_6"/>
<dbReference type="UniPathway" id="UPA00908">
    <property type="reaction ID" value="UER00885"/>
</dbReference>
<dbReference type="Proteomes" id="UP000000260">
    <property type="component" value="Chromosome"/>
</dbReference>
<dbReference type="GO" id="GO:0008894">
    <property type="term" value="F:guanosine-5'-triphosphate,3'-diphosphate diphosphatase activity"/>
    <property type="evidence" value="ECO:0007669"/>
    <property type="project" value="UniProtKB-UniRule"/>
</dbReference>
<dbReference type="GO" id="GO:0015974">
    <property type="term" value="P:guanosine pentaphosphate catabolic process"/>
    <property type="evidence" value="ECO:0007669"/>
    <property type="project" value="InterPro"/>
</dbReference>
<dbReference type="GO" id="GO:0015970">
    <property type="term" value="P:guanosine tetraphosphate biosynthetic process"/>
    <property type="evidence" value="ECO:0007669"/>
    <property type="project" value="UniProtKB-UniRule"/>
</dbReference>
<dbReference type="GO" id="GO:0015949">
    <property type="term" value="P:nucleobase-containing small molecule interconversion"/>
    <property type="evidence" value="ECO:0007669"/>
    <property type="project" value="TreeGrafter"/>
</dbReference>
<dbReference type="FunFam" id="1.10.3210.10:FF:000004">
    <property type="entry name" value="Guanosine-5'-triphosphate,3'-diphosphate pyrophosphatase"/>
    <property type="match status" value="1"/>
</dbReference>
<dbReference type="FunFam" id="3.30.420.150:FF:000001">
    <property type="entry name" value="Guanosine-5'-triphosphate,3'-diphosphate pyrophosphatase"/>
    <property type="match status" value="1"/>
</dbReference>
<dbReference type="FunFam" id="3.30.420.40:FF:000023">
    <property type="entry name" value="Guanosine-5'-triphosphate,3'-diphosphate pyrophosphatase"/>
    <property type="match status" value="1"/>
</dbReference>
<dbReference type="Gene3D" id="3.30.420.40">
    <property type="match status" value="1"/>
</dbReference>
<dbReference type="Gene3D" id="3.30.420.150">
    <property type="entry name" value="Exopolyphosphatase. Domain 2"/>
    <property type="match status" value="1"/>
</dbReference>
<dbReference type="Gene3D" id="1.10.3210.10">
    <property type="entry name" value="Hypothetical protein af1432"/>
    <property type="match status" value="1"/>
</dbReference>
<dbReference type="HAMAP" id="MF_01550">
    <property type="entry name" value="GppA"/>
    <property type="match status" value="1"/>
</dbReference>
<dbReference type="InterPro" id="IPR043129">
    <property type="entry name" value="ATPase_NBD"/>
</dbReference>
<dbReference type="InterPro" id="IPR050273">
    <property type="entry name" value="GppA/Ppx_hydrolase"/>
</dbReference>
<dbReference type="InterPro" id="IPR023709">
    <property type="entry name" value="Guo-5TP_3DP_PyrP"/>
</dbReference>
<dbReference type="InterPro" id="IPR048950">
    <property type="entry name" value="Ppx_GppA_C"/>
</dbReference>
<dbReference type="InterPro" id="IPR003695">
    <property type="entry name" value="Ppx_GppA_N"/>
</dbReference>
<dbReference type="InterPro" id="IPR030673">
    <property type="entry name" value="PyroPPase_GppA_Ppx"/>
</dbReference>
<dbReference type="NCBIfam" id="NF008260">
    <property type="entry name" value="PRK11031.1"/>
    <property type="match status" value="1"/>
</dbReference>
<dbReference type="PANTHER" id="PTHR30005">
    <property type="entry name" value="EXOPOLYPHOSPHATASE"/>
    <property type="match status" value="1"/>
</dbReference>
<dbReference type="PANTHER" id="PTHR30005:SF0">
    <property type="entry name" value="RETROGRADE REGULATION PROTEIN 2"/>
    <property type="match status" value="1"/>
</dbReference>
<dbReference type="Pfam" id="PF02541">
    <property type="entry name" value="Ppx-GppA"/>
    <property type="match status" value="1"/>
</dbReference>
<dbReference type="Pfam" id="PF21447">
    <property type="entry name" value="Ppx-GppA_III"/>
    <property type="match status" value="1"/>
</dbReference>
<dbReference type="PIRSF" id="PIRSF001267">
    <property type="entry name" value="Pyrophosphatase_GppA_Ppx"/>
    <property type="match status" value="1"/>
</dbReference>
<dbReference type="SUPFAM" id="SSF53067">
    <property type="entry name" value="Actin-like ATPase domain"/>
    <property type="match status" value="2"/>
</dbReference>
<dbReference type="SUPFAM" id="SSF109604">
    <property type="entry name" value="HD-domain/PDEase-like"/>
    <property type="match status" value="1"/>
</dbReference>
<keyword id="KW-0378">Hydrolase</keyword>
<keyword id="KW-1185">Reference proteome</keyword>
<gene>
    <name evidence="1" type="primary">gppA</name>
    <name type="ordered locus">ESA_03778</name>
</gene>